<proteinExistence type="inferred from homology"/>
<protein>
    <recommendedName>
        <fullName evidence="1">Glutamate--tRNA ligase</fullName>
        <ecNumber evidence="1">6.1.1.17</ecNumber>
    </recommendedName>
    <alternativeName>
        <fullName evidence="1">Glutamyl-tRNA synthetase</fullName>
        <shortName evidence="1">GluRS</shortName>
    </alternativeName>
</protein>
<feature type="chain" id="PRO_0000119660" description="Glutamate--tRNA ligase">
    <location>
        <begin position="1"/>
        <end position="484"/>
    </location>
</feature>
<feature type="short sequence motif" description="'HIGH' region" evidence="1">
    <location>
        <begin position="11"/>
        <end position="21"/>
    </location>
</feature>
<feature type="short sequence motif" description="'KMSKS' region" evidence="1">
    <location>
        <begin position="255"/>
        <end position="259"/>
    </location>
</feature>
<feature type="binding site" evidence="1">
    <location>
        <position position="258"/>
    </location>
    <ligand>
        <name>ATP</name>
        <dbReference type="ChEBI" id="CHEBI:30616"/>
    </ligand>
</feature>
<dbReference type="EC" id="6.1.1.17" evidence="1"/>
<dbReference type="EMBL" id="AL766843">
    <property type="protein sequence ID" value="CAD45757.1"/>
    <property type="molecule type" value="Genomic_DNA"/>
</dbReference>
<dbReference type="RefSeq" id="WP_001284505.1">
    <property type="nucleotide sequence ID" value="NC_004368.1"/>
</dbReference>
<dbReference type="SMR" id="Q8E7P2"/>
<dbReference type="KEGG" id="san:gbs0112"/>
<dbReference type="eggNOG" id="COG0008">
    <property type="taxonomic scope" value="Bacteria"/>
</dbReference>
<dbReference type="HOGENOM" id="CLU_015768_6_1_9"/>
<dbReference type="Proteomes" id="UP000000823">
    <property type="component" value="Chromosome"/>
</dbReference>
<dbReference type="GO" id="GO:0005829">
    <property type="term" value="C:cytosol"/>
    <property type="evidence" value="ECO:0007669"/>
    <property type="project" value="TreeGrafter"/>
</dbReference>
<dbReference type="GO" id="GO:0005524">
    <property type="term" value="F:ATP binding"/>
    <property type="evidence" value="ECO:0007669"/>
    <property type="project" value="UniProtKB-UniRule"/>
</dbReference>
<dbReference type="GO" id="GO:0004818">
    <property type="term" value="F:glutamate-tRNA ligase activity"/>
    <property type="evidence" value="ECO:0007669"/>
    <property type="project" value="UniProtKB-UniRule"/>
</dbReference>
<dbReference type="GO" id="GO:0000049">
    <property type="term" value="F:tRNA binding"/>
    <property type="evidence" value="ECO:0007669"/>
    <property type="project" value="InterPro"/>
</dbReference>
<dbReference type="GO" id="GO:0008270">
    <property type="term" value="F:zinc ion binding"/>
    <property type="evidence" value="ECO:0007669"/>
    <property type="project" value="InterPro"/>
</dbReference>
<dbReference type="GO" id="GO:0006424">
    <property type="term" value="P:glutamyl-tRNA aminoacylation"/>
    <property type="evidence" value="ECO:0007669"/>
    <property type="project" value="UniProtKB-UniRule"/>
</dbReference>
<dbReference type="CDD" id="cd00808">
    <property type="entry name" value="GluRS_core"/>
    <property type="match status" value="1"/>
</dbReference>
<dbReference type="FunFam" id="1.10.10.350:FF:000002">
    <property type="entry name" value="Glutamate--tRNA ligase"/>
    <property type="match status" value="1"/>
</dbReference>
<dbReference type="FunFam" id="3.40.50.620:FF:000007">
    <property type="entry name" value="Glutamate--tRNA ligase"/>
    <property type="match status" value="1"/>
</dbReference>
<dbReference type="Gene3D" id="1.10.10.350">
    <property type="match status" value="1"/>
</dbReference>
<dbReference type="Gene3D" id="3.40.50.620">
    <property type="entry name" value="HUPs"/>
    <property type="match status" value="1"/>
</dbReference>
<dbReference type="HAMAP" id="MF_00022">
    <property type="entry name" value="Glu_tRNA_synth_type1"/>
    <property type="match status" value="1"/>
</dbReference>
<dbReference type="InterPro" id="IPR045462">
    <property type="entry name" value="aa-tRNA-synth_I_cd-bd"/>
</dbReference>
<dbReference type="InterPro" id="IPR020751">
    <property type="entry name" value="aa-tRNA-synth_I_codon-bd_sub2"/>
</dbReference>
<dbReference type="InterPro" id="IPR001412">
    <property type="entry name" value="aa-tRNA-synth_I_CS"/>
</dbReference>
<dbReference type="InterPro" id="IPR008925">
    <property type="entry name" value="aa_tRNA-synth_I_cd-bd_sf"/>
</dbReference>
<dbReference type="InterPro" id="IPR004527">
    <property type="entry name" value="Glu-tRNA-ligase_bac/mito"/>
</dbReference>
<dbReference type="InterPro" id="IPR000924">
    <property type="entry name" value="Glu/Gln-tRNA-synth"/>
</dbReference>
<dbReference type="InterPro" id="IPR020058">
    <property type="entry name" value="Glu/Gln-tRNA-synth_Ib_cat-dom"/>
</dbReference>
<dbReference type="InterPro" id="IPR049940">
    <property type="entry name" value="GluQ/Sye"/>
</dbReference>
<dbReference type="InterPro" id="IPR033910">
    <property type="entry name" value="GluRS_core"/>
</dbReference>
<dbReference type="InterPro" id="IPR014729">
    <property type="entry name" value="Rossmann-like_a/b/a_fold"/>
</dbReference>
<dbReference type="NCBIfam" id="TIGR00464">
    <property type="entry name" value="gltX_bact"/>
    <property type="match status" value="1"/>
</dbReference>
<dbReference type="PANTHER" id="PTHR43311">
    <property type="entry name" value="GLUTAMATE--TRNA LIGASE"/>
    <property type="match status" value="1"/>
</dbReference>
<dbReference type="PANTHER" id="PTHR43311:SF2">
    <property type="entry name" value="GLUTAMATE--TRNA LIGASE, MITOCHONDRIAL-RELATED"/>
    <property type="match status" value="1"/>
</dbReference>
<dbReference type="Pfam" id="PF19269">
    <property type="entry name" value="Anticodon_2"/>
    <property type="match status" value="1"/>
</dbReference>
<dbReference type="Pfam" id="PF00749">
    <property type="entry name" value="tRNA-synt_1c"/>
    <property type="match status" value="1"/>
</dbReference>
<dbReference type="PRINTS" id="PR00987">
    <property type="entry name" value="TRNASYNTHGLU"/>
</dbReference>
<dbReference type="SUPFAM" id="SSF48163">
    <property type="entry name" value="An anticodon-binding domain of class I aminoacyl-tRNA synthetases"/>
    <property type="match status" value="1"/>
</dbReference>
<dbReference type="SUPFAM" id="SSF52374">
    <property type="entry name" value="Nucleotidylyl transferase"/>
    <property type="match status" value="1"/>
</dbReference>
<dbReference type="PROSITE" id="PS00178">
    <property type="entry name" value="AA_TRNA_LIGASE_I"/>
    <property type="match status" value="1"/>
</dbReference>
<organism>
    <name type="scientific">Streptococcus agalactiae serotype III (strain NEM316)</name>
    <dbReference type="NCBI Taxonomy" id="211110"/>
    <lineage>
        <taxon>Bacteria</taxon>
        <taxon>Bacillati</taxon>
        <taxon>Bacillota</taxon>
        <taxon>Bacilli</taxon>
        <taxon>Lactobacillales</taxon>
        <taxon>Streptococcaceae</taxon>
        <taxon>Streptococcus</taxon>
    </lineage>
</organism>
<gene>
    <name evidence="1" type="primary">gltX</name>
    <name type="ordered locus">gbs0112</name>
</gene>
<name>SYE_STRA3</name>
<keyword id="KW-0030">Aminoacyl-tRNA synthetase</keyword>
<keyword id="KW-0067">ATP-binding</keyword>
<keyword id="KW-0963">Cytoplasm</keyword>
<keyword id="KW-0436">Ligase</keyword>
<keyword id="KW-0547">Nucleotide-binding</keyword>
<keyword id="KW-0648">Protein biosynthesis</keyword>
<sequence>MANKIRVRYAPSPTGLLHIGNARTALFNYLYARHHGGDFVIRIEDTDRKRHVEDGERSQLENLRWLGMDWDESPETHENYRQSERLELYQRYIDQLLAEGKAYKSYVTEEELAAERERQELAGETPRYINEFIGMSETEKEAYIAEREASGIIPTVRLAVNESGIYKWTDMVKGDIEFEGSNIGGDWVIQKKDGYPTYNFAVVIDDHDMQISHVIRGDDHIANTPKQLMVYEALGWEAPQFGHMTLIINSETGKKLSKRDTNTLQFIEDYRKKGYMSEAVFNFIALLGWNPGGEEEIFSREQLINLFDENRLSKSPAAFDQKKMDWMSNDYLKNADFESVFALCKPFLEEAGRLTDKAEKLVELYKPQLKSADEIVPLTDLFFADFPELTEAEKEVMAAETVPTVLSAFKEKLVSLSDEEFTRDTIFPQIKAVQKETGIKGKNLFMPIRIAVSGEMHGPELPDTIYLLGKEKSVQHIDNMLAKL</sequence>
<reference key="1">
    <citation type="journal article" date="2002" name="Mol. Microbiol.">
        <title>Genome sequence of Streptococcus agalactiae, a pathogen causing invasive neonatal disease.</title>
        <authorList>
            <person name="Glaser P."/>
            <person name="Rusniok C."/>
            <person name="Buchrieser C."/>
            <person name="Chevalier F."/>
            <person name="Frangeul L."/>
            <person name="Msadek T."/>
            <person name="Zouine M."/>
            <person name="Couve E."/>
            <person name="Lalioui L."/>
            <person name="Poyart C."/>
            <person name="Trieu-Cuot P."/>
            <person name="Kunst F."/>
        </authorList>
    </citation>
    <scope>NUCLEOTIDE SEQUENCE [LARGE SCALE GENOMIC DNA]</scope>
    <source>
        <strain>NEM316</strain>
    </source>
</reference>
<accession>Q8E7P2</accession>
<evidence type="ECO:0000255" key="1">
    <source>
        <dbReference type="HAMAP-Rule" id="MF_00022"/>
    </source>
</evidence>
<comment type="function">
    <text evidence="1">Catalyzes the attachment of glutamate to tRNA(Glu) in a two-step reaction: glutamate is first activated by ATP to form Glu-AMP and then transferred to the acceptor end of tRNA(Glu).</text>
</comment>
<comment type="catalytic activity">
    <reaction evidence="1">
        <text>tRNA(Glu) + L-glutamate + ATP = L-glutamyl-tRNA(Glu) + AMP + diphosphate</text>
        <dbReference type="Rhea" id="RHEA:23540"/>
        <dbReference type="Rhea" id="RHEA-COMP:9663"/>
        <dbReference type="Rhea" id="RHEA-COMP:9680"/>
        <dbReference type="ChEBI" id="CHEBI:29985"/>
        <dbReference type="ChEBI" id="CHEBI:30616"/>
        <dbReference type="ChEBI" id="CHEBI:33019"/>
        <dbReference type="ChEBI" id="CHEBI:78442"/>
        <dbReference type="ChEBI" id="CHEBI:78520"/>
        <dbReference type="ChEBI" id="CHEBI:456215"/>
        <dbReference type="EC" id="6.1.1.17"/>
    </reaction>
</comment>
<comment type="subunit">
    <text evidence="1">Monomer.</text>
</comment>
<comment type="subcellular location">
    <subcellularLocation>
        <location evidence="1">Cytoplasm</location>
    </subcellularLocation>
</comment>
<comment type="similarity">
    <text evidence="1">Belongs to the class-I aminoacyl-tRNA synthetase family. Glutamate--tRNA ligase type 1 subfamily.</text>
</comment>